<protein>
    <recommendedName>
        <fullName evidence="1">Photosystem II reaction center protein J</fullName>
        <shortName evidence="1">PSII-J</shortName>
    </recommendedName>
</protein>
<gene>
    <name evidence="1" type="primary">psbJ</name>
</gene>
<geneLocation type="chloroplast"/>
<sequence>MSNVGTSGRIPLWLVGTVAGILVLGLVGLFFYGSYVGLGSSL</sequence>
<evidence type="ECO:0000255" key="1">
    <source>
        <dbReference type="HAMAP-Rule" id="MF_01305"/>
    </source>
</evidence>
<dbReference type="EMBL" id="AY958085">
    <property type="protein sequence ID" value="AAX45729.1"/>
    <property type="molecule type" value="Genomic_DNA"/>
</dbReference>
<dbReference type="RefSeq" id="YP_636402.1">
    <property type="nucleotide sequence ID" value="NC_008116.1"/>
</dbReference>
<dbReference type="SMR" id="Q32RX4"/>
<dbReference type="GeneID" id="4108688"/>
<dbReference type="GO" id="GO:0009535">
    <property type="term" value="C:chloroplast thylakoid membrane"/>
    <property type="evidence" value="ECO:0007669"/>
    <property type="project" value="UniProtKB-SubCell"/>
</dbReference>
<dbReference type="GO" id="GO:0009539">
    <property type="term" value="C:photosystem II reaction center"/>
    <property type="evidence" value="ECO:0007669"/>
    <property type="project" value="InterPro"/>
</dbReference>
<dbReference type="GO" id="GO:0015979">
    <property type="term" value="P:photosynthesis"/>
    <property type="evidence" value="ECO:0007669"/>
    <property type="project" value="UniProtKB-UniRule"/>
</dbReference>
<dbReference type="Gene3D" id="6.10.250.2070">
    <property type="match status" value="1"/>
</dbReference>
<dbReference type="HAMAP" id="MF_01305">
    <property type="entry name" value="PSII_PsbJ"/>
    <property type="match status" value="1"/>
</dbReference>
<dbReference type="InterPro" id="IPR002682">
    <property type="entry name" value="PSII_PsbJ"/>
</dbReference>
<dbReference type="InterPro" id="IPR037267">
    <property type="entry name" value="PSII_PsbJ_sf"/>
</dbReference>
<dbReference type="NCBIfam" id="NF002722">
    <property type="entry name" value="PRK02565.1"/>
    <property type="match status" value="1"/>
</dbReference>
<dbReference type="PANTHER" id="PTHR34812">
    <property type="entry name" value="PHOTOSYSTEM II REACTION CENTER PROTEIN J"/>
    <property type="match status" value="1"/>
</dbReference>
<dbReference type="PANTHER" id="PTHR34812:SF3">
    <property type="entry name" value="PHOTOSYSTEM II REACTION CENTER PROTEIN J"/>
    <property type="match status" value="1"/>
</dbReference>
<dbReference type="Pfam" id="PF01788">
    <property type="entry name" value="PsbJ"/>
    <property type="match status" value="1"/>
</dbReference>
<dbReference type="SUPFAM" id="SSF161021">
    <property type="entry name" value="Photosystem II reaction center protein J, PsbJ"/>
    <property type="match status" value="1"/>
</dbReference>
<name>PSBJ_STAPU</name>
<organism>
    <name type="scientific">Staurastrum punctulatum</name>
    <name type="common">Green alga</name>
    <name type="synonym">Cosmoastrum punctulatum</name>
    <dbReference type="NCBI Taxonomy" id="102822"/>
    <lineage>
        <taxon>Eukaryota</taxon>
        <taxon>Viridiplantae</taxon>
        <taxon>Streptophyta</taxon>
        <taxon>Zygnematophyceae</taxon>
        <taxon>Zygnematophycidae</taxon>
        <taxon>Desmidiales</taxon>
        <taxon>Desmidiaceae</taxon>
        <taxon>Staurastrum</taxon>
    </lineage>
</organism>
<reference key="1">
    <citation type="journal article" date="2005" name="BMC Biol.">
        <title>The complete chloroplast DNA sequences of the charophycean green algae Staurastrum and Zygnema reveal that the chloroplast genome underwent extensive changes during the evolution of the Zygnematales.</title>
        <authorList>
            <person name="Turmel M."/>
            <person name="Otis C."/>
            <person name="Lemieux C."/>
        </authorList>
    </citation>
    <scope>NUCLEOTIDE SEQUENCE [LARGE SCALE GENOMIC DNA]</scope>
</reference>
<accession>Q32RX4</accession>
<feature type="chain" id="PRO_0000276117" description="Photosystem II reaction center protein J">
    <location>
        <begin position="1"/>
        <end position="42"/>
    </location>
</feature>
<feature type="transmembrane region" description="Helical" evidence="1">
    <location>
        <begin position="10"/>
        <end position="30"/>
    </location>
</feature>
<comment type="function">
    <text evidence="1">One of the components of the core complex of photosystem II (PSII). PSII is a light-driven water:plastoquinone oxidoreductase that uses light energy to abstract electrons from H(2)O, generating O(2) and a proton gradient subsequently used for ATP formation. It consists of a core antenna complex that captures photons, and an electron transfer chain that converts photonic excitation into a charge separation.</text>
</comment>
<comment type="subunit">
    <text evidence="1">PSII is composed of 1 copy each of membrane proteins PsbA, PsbB, PsbC, PsbD, PsbE, PsbF, PsbH, PsbI, PsbJ, PsbK, PsbL, PsbM, PsbT, PsbX, PsbY, PsbZ, Psb30/Ycf12, at least 3 peripheral proteins of the oxygen-evolving complex and a large number of cofactors. It forms dimeric complexes.</text>
</comment>
<comment type="subcellular location">
    <subcellularLocation>
        <location evidence="1">Plastid</location>
        <location evidence="1">Chloroplast thylakoid membrane</location>
        <topology evidence="1">Single-pass membrane protein</topology>
    </subcellularLocation>
</comment>
<comment type="similarity">
    <text evidence="1">Belongs to the PsbJ family.</text>
</comment>
<keyword id="KW-0150">Chloroplast</keyword>
<keyword id="KW-0472">Membrane</keyword>
<keyword id="KW-0602">Photosynthesis</keyword>
<keyword id="KW-0604">Photosystem II</keyword>
<keyword id="KW-0934">Plastid</keyword>
<keyword id="KW-0674">Reaction center</keyword>
<keyword id="KW-0793">Thylakoid</keyword>
<keyword id="KW-0812">Transmembrane</keyword>
<keyword id="KW-1133">Transmembrane helix</keyword>
<proteinExistence type="inferred from homology"/>